<evidence type="ECO:0000256" key="1">
    <source>
        <dbReference type="SAM" id="MobiDB-lite"/>
    </source>
</evidence>
<evidence type="ECO:0000305" key="2"/>
<reference key="1">
    <citation type="journal article" date="1994" name="J. Cell Sci.">
        <title>Overexpression of a truncated cyclin B gene arrests Dictyostelium cell division during mitosis.</title>
        <authorList>
            <person name="Luo Q."/>
            <person name="Michaelis C."/>
            <person name="Weeks G."/>
        </authorList>
    </citation>
    <scope>NUCLEOTIDE SEQUENCE [GENOMIC DNA]</scope>
    <source>
        <strain>AX2</strain>
        <strain>AX3</strain>
    </source>
</reference>
<reference key="2">
    <citation type="journal article" date="2002" name="Nature">
        <title>Sequence and analysis of chromosome 2 of Dictyostelium discoideum.</title>
        <authorList>
            <person name="Gloeckner G."/>
            <person name="Eichinger L."/>
            <person name="Szafranski K."/>
            <person name="Pachebat J.A."/>
            <person name="Bankier A.T."/>
            <person name="Dear P.H."/>
            <person name="Lehmann R."/>
            <person name="Baumgart C."/>
            <person name="Parra G."/>
            <person name="Abril J.F."/>
            <person name="Guigo R."/>
            <person name="Kumpf K."/>
            <person name="Tunggal B."/>
            <person name="Cox E.C."/>
            <person name="Quail M.A."/>
            <person name="Platzer M."/>
            <person name="Rosenthal A."/>
            <person name="Noegel A.A."/>
        </authorList>
    </citation>
    <scope>NUCLEOTIDE SEQUENCE [LARGE SCALE GENOMIC DNA]</scope>
    <source>
        <strain>AX4</strain>
    </source>
</reference>
<reference key="3">
    <citation type="journal article" date="2005" name="Nature">
        <title>The genome of the social amoeba Dictyostelium discoideum.</title>
        <authorList>
            <person name="Eichinger L."/>
            <person name="Pachebat J.A."/>
            <person name="Gloeckner G."/>
            <person name="Rajandream M.A."/>
            <person name="Sucgang R."/>
            <person name="Berriman M."/>
            <person name="Song J."/>
            <person name="Olsen R."/>
            <person name="Szafranski K."/>
            <person name="Xu Q."/>
            <person name="Tunggal B."/>
            <person name="Kummerfeld S."/>
            <person name="Madera M."/>
            <person name="Konfortov B.A."/>
            <person name="Rivero F."/>
            <person name="Bankier A.T."/>
            <person name="Lehmann R."/>
            <person name="Hamlin N."/>
            <person name="Davies R."/>
            <person name="Gaudet P."/>
            <person name="Fey P."/>
            <person name="Pilcher K."/>
            <person name="Chen G."/>
            <person name="Saunders D."/>
            <person name="Sodergren E.J."/>
            <person name="Davis P."/>
            <person name="Kerhornou A."/>
            <person name="Nie X."/>
            <person name="Hall N."/>
            <person name="Anjard C."/>
            <person name="Hemphill L."/>
            <person name="Bason N."/>
            <person name="Farbrother P."/>
            <person name="Desany B."/>
            <person name="Just E."/>
            <person name="Morio T."/>
            <person name="Rost R."/>
            <person name="Churcher C.M."/>
            <person name="Cooper J."/>
            <person name="Haydock S."/>
            <person name="van Driessche N."/>
            <person name="Cronin A."/>
            <person name="Goodhead I."/>
            <person name="Muzny D.M."/>
            <person name="Mourier T."/>
            <person name="Pain A."/>
            <person name="Lu M."/>
            <person name="Harper D."/>
            <person name="Lindsay R."/>
            <person name="Hauser H."/>
            <person name="James K.D."/>
            <person name="Quiles M."/>
            <person name="Madan Babu M."/>
            <person name="Saito T."/>
            <person name="Buchrieser C."/>
            <person name="Wardroper A."/>
            <person name="Felder M."/>
            <person name="Thangavelu M."/>
            <person name="Johnson D."/>
            <person name="Knights A."/>
            <person name="Loulseged H."/>
            <person name="Mungall K.L."/>
            <person name="Oliver K."/>
            <person name="Price C."/>
            <person name="Quail M.A."/>
            <person name="Urushihara H."/>
            <person name="Hernandez J."/>
            <person name="Rabbinowitsch E."/>
            <person name="Steffen D."/>
            <person name="Sanders M."/>
            <person name="Ma J."/>
            <person name="Kohara Y."/>
            <person name="Sharp S."/>
            <person name="Simmonds M.N."/>
            <person name="Spiegler S."/>
            <person name="Tivey A."/>
            <person name="Sugano S."/>
            <person name="White B."/>
            <person name="Walker D."/>
            <person name="Woodward J.R."/>
            <person name="Winckler T."/>
            <person name="Tanaka Y."/>
            <person name="Shaulsky G."/>
            <person name="Schleicher M."/>
            <person name="Weinstock G.M."/>
            <person name="Rosenthal A."/>
            <person name="Cox E.C."/>
            <person name="Chisholm R.L."/>
            <person name="Gibbs R.A."/>
            <person name="Loomis W.F."/>
            <person name="Platzer M."/>
            <person name="Kay R.R."/>
            <person name="Williams J.G."/>
            <person name="Dear P.H."/>
            <person name="Noegel A.A."/>
            <person name="Barrell B.G."/>
            <person name="Kuspa A."/>
        </authorList>
    </citation>
    <scope>NUCLEOTIDE SEQUENCE [LARGE SCALE GENOMIC DNA]</scope>
    <source>
        <strain>AX4</strain>
    </source>
</reference>
<reference key="4">
    <citation type="submission" date="2009-07" db="UniProtKB">
        <authorList>
            <person name="Bienvenut W.V."/>
            <person name="Ura S."/>
            <person name="Insall R.H."/>
        </authorList>
    </citation>
    <scope>PROTEIN SEQUENCE OF 94-126; 341-351 AND 425-436</scope>
    <scope>IDENTIFICATION BY MASS SPECTROMETRY</scope>
    <source>
        <strain>AX2</strain>
    </source>
</reference>
<dbReference type="EMBL" id="U11056">
    <property type="protein sequence ID" value="AAC46498.1"/>
    <property type="molecule type" value="Genomic_DNA"/>
</dbReference>
<dbReference type="EMBL" id="AAFI02000013">
    <property type="protein sequence ID" value="EAL69497.1"/>
    <property type="molecule type" value="Genomic_DNA"/>
</dbReference>
<dbReference type="RefSeq" id="XP_643591.1">
    <property type="nucleotide sequence ID" value="XM_638499.1"/>
</dbReference>
<dbReference type="SMR" id="P42524"/>
<dbReference type="FunCoup" id="P42524">
    <property type="interactions" value="221"/>
</dbReference>
<dbReference type="STRING" id="44689.P42524"/>
<dbReference type="PaxDb" id="44689-DDB0185035"/>
<dbReference type="EnsemblProtists" id="EAL69497">
    <property type="protein sequence ID" value="EAL69497"/>
    <property type="gene ID" value="DDB_G0275493"/>
</dbReference>
<dbReference type="GeneID" id="8620178"/>
<dbReference type="KEGG" id="ddi:DDB_G0275493"/>
<dbReference type="dictyBase" id="DDB_G0275493">
    <property type="gene designation" value="cycB"/>
</dbReference>
<dbReference type="VEuPathDB" id="AmoebaDB:DDB_G0275493"/>
<dbReference type="eggNOG" id="KOG0653">
    <property type="taxonomic scope" value="Eukaryota"/>
</dbReference>
<dbReference type="HOGENOM" id="CLU_020695_12_4_1"/>
<dbReference type="InParanoid" id="P42524"/>
<dbReference type="OMA" id="FFMVELC"/>
<dbReference type="PhylomeDB" id="P42524"/>
<dbReference type="Reactome" id="R-DDI-174048">
    <property type="pathway name" value="APC/C:Cdc20 mediated degradation of Cyclin B"/>
</dbReference>
<dbReference type="PRO" id="PR:P42524"/>
<dbReference type="Proteomes" id="UP000002195">
    <property type="component" value="Chromosome 2"/>
</dbReference>
<dbReference type="GO" id="GO:0005813">
    <property type="term" value="C:centrosome"/>
    <property type="evidence" value="ECO:0000314"/>
    <property type="project" value="dictyBase"/>
</dbReference>
<dbReference type="GO" id="GO:0000307">
    <property type="term" value="C:cyclin-dependent protein kinase holoenzyme complex"/>
    <property type="evidence" value="ECO:0000318"/>
    <property type="project" value="GO_Central"/>
</dbReference>
<dbReference type="GO" id="GO:0005737">
    <property type="term" value="C:cytoplasm"/>
    <property type="evidence" value="ECO:0000318"/>
    <property type="project" value="GO_Central"/>
</dbReference>
<dbReference type="GO" id="GO:0031981">
    <property type="term" value="C:nuclear lumen"/>
    <property type="evidence" value="ECO:0000314"/>
    <property type="project" value="dictyBase"/>
</dbReference>
<dbReference type="GO" id="GO:0005634">
    <property type="term" value="C:nucleus"/>
    <property type="evidence" value="ECO:0000318"/>
    <property type="project" value="GO_Central"/>
</dbReference>
<dbReference type="GO" id="GO:0031616">
    <property type="term" value="C:spindle pole centrosome"/>
    <property type="evidence" value="ECO:0000314"/>
    <property type="project" value="dictyBase"/>
</dbReference>
<dbReference type="GO" id="GO:0016538">
    <property type="term" value="F:cyclin-dependent protein serine/threonine kinase regulator activity"/>
    <property type="evidence" value="ECO:0000318"/>
    <property type="project" value="GO_Central"/>
</dbReference>
<dbReference type="GO" id="GO:0051301">
    <property type="term" value="P:cell division"/>
    <property type="evidence" value="ECO:0007669"/>
    <property type="project" value="UniProtKB-KW"/>
</dbReference>
<dbReference type="GO" id="GO:0000082">
    <property type="term" value="P:G1/S transition of mitotic cell cycle"/>
    <property type="evidence" value="ECO:0000318"/>
    <property type="project" value="GO_Central"/>
</dbReference>
<dbReference type="GO" id="GO:0061842">
    <property type="term" value="P:microtubule organizing center localization"/>
    <property type="evidence" value="ECO:0000314"/>
    <property type="project" value="dictyBase"/>
</dbReference>
<dbReference type="GO" id="GO:0000278">
    <property type="term" value="P:mitotic cell cycle"/>
    <property type="evidence" value="ECO:0000315"/>
    <property type="project" value="dictyBase"/>
</dbReference>
<dbReference type="GO" id="GO:0051592">
    <property type="term" value="P:response to calcium ion"/>
    <property type="evidence" value="ECO:0000314"/>
    <property type="project" value="dictyBase"/>
</dbReference>
<dbReference type="CDD" id="cd20507">
    <property type="entry name" value="CYCLIN_CCNB1-like_rpt1"/>
    <property type="match status" value="1"/>
</dbReference>
<dbReference type="CDD" id="cd20509">
    <property type="entry name" value="CYCLIN_CCNB1-like_rpt2"/>
    <property type="match status" value="1"/>
</dbReference>
<dbReference type="FunFam" id="1.10.472.10:FF:000001">
    <property type="entry name" value="G2/mitotic-specific cyclin"/>
    <property type="match status" value="1"/>
</dbReference>
<dbReference type="FunFam" id="1.10.472.10:FF:000091">
    <property type="entry name" value="putative cyclin-B3-1 isoform X3"/>
    <property type="match status" value="1"/>
</dbReference>
<dbReference type="Gene3D" id="1.10.472.10">
    <property type="entry name" value="Cyclin-like"/>
    <property type="match status" value="2"/>
</dbReference>
<dbReference type="InterPro" id="IPR039361">
    <property type="entry name" value="Cyclin"/>
</dbReference>
<dbReference type="InterPro" id="IPR013763">
    <property type="entry name" value="Cyclin-like_dom"/>
</dbReference>
<dbReference type="InterPro" id="IPR036915">
    <property type="entry name" value="Cyclin-like_sf"/>
</dbReference>
<dbReference type="InterPro" id="IPR004367">
    <property type="entry name" value="Cyclin_C-dom"/>
</dbReference>
<dbReference type="InterPro" id="IPR006671">
    <property type="entry name" value="Cyclin_N"/>
</dbReference>
<dbReference type="InterPro" id="IPR048258">
    <property type="entry name" value="Cyclins_cyclin-box"/>
</dbReference>
<dbReference type="PANTHER" id="PTHR10177">
    <property type="entry name" value="CYCLINS"/>
    <property type="match status" value="1"/>
</dbReference>
<dbReference type="Pfam" id="PF02984">
    <property type="entry name" value="Cyclin_C"/>
    <property type="match status" value="1"/>
</dbReference>
<dbReference type="Pfam" id="PF00134">
    <property type="entry name" value="Cyclin_N"/>
    <property type="match status" value="1"/>
</dbReference>
<dbReference type="SMART" id="SM00385">
    <property type="entry name" value="CYCLIN"/>
    <property type="match status" value="2"/>
</dbReference>
<dbReference type="SMART" id="SM01332">
    <property type="entry name" value="Cyclin_C"/>
    <property type="match status" value="1"/>
</dbReference>
<dbReference type="SUPFAM" id="SSF47954">
    <property type="entry name" value="Cyclin-like"/>
    <property type="match status" value="2"/>
</dbReference>
<dbReference type="PROSITE" id="PS00292">
    <property type="entry name" value="CYCLINS"/>
    <property type="match status" value="1"/>
</dbReference>
<protein>
    <recommendedName>
        <fullName>G2/mitotic-specific cyclin-B</fullName>
    </recommendedName>
</protein>
<gene>
    <name type="primary">cycB</name>
    <name type="synonym">clb1</name>
    <name type="ORF">DDB_G0275493</name>
</gene>
<name>CCNB_DICDI</name>
<accession>P42524</accession>
<accession>Q552U0</accession>
<keyword id="KW-0131">Cell cycle</keyword>
<keyword id="KW-0132">Cell division</keyword>
<keyword id="KW-0195">Cyclin</keyword>
<keyword id="KW-0903">Direct protein sequencing</keyword>
<keyword id="KW-0498">Mitosis</keyword>
<keyword id="KW-1185">Reference proteome</keyword>
<proteinExistence type="evidence at protein level"/>
<sequence length="436" mass="49534">MSTINNPLNIKTRSHSSMGGGMIMDENKVPKSSIGMDKKIGGTTGLKSHRGALSDLTNNTHQTTGMATKTVQLSNNNIIMPQPTNTRNNIITRSKSIIDNGASLRNSALISGVLPNANGPVNKVQKRDIQSMEMMNNIPQQPVMIDDVDNDTNMIQEEQMVIDITEVPENIDIYDSHDPQCVGEYVNEIFAYYREKEQIDKIDKDYIKNQYHINERMRAILVDWMMAVHVRFKLLSETFFLSVNIVDRYLAKVMIPVTKLQLVGITAILLACKYEEIYSPQIKDFVHTSDDACTHAEVIDMERQILSTLQFHMSVATPLHFLRRFSKAAGSDSRTHSLSKYLSELSMVEYRMVQFVPSMIAAASIYVARRMTMKSGPYWNVTLEYYTCYKESEILQCAQELKEVRKRADTSNLKATRKKYLSSKLMEVAAIPVVEF</sequence>
<organism>
    <name type="scientific">Dictyostelium discoideum</name>
    <name type="common">Social amoeba</name>
    <dbReference type="NCBI Taxonomy" id="44689"/>
    <lineage>
        <taxon>Eukaryota</taxon>
        <taxon>Amoebozoa</taxon>
        <taxon>Evosea</taxon>
        <taxon>Eumycetozoa</taxon>
        <taxon>Dictyostelia</taxon>
        <taxon>Dictyosteliales</taxon>
        <taxon>Dictyosteliaceae</taxon>
        <taxon>Dictyostelium</taxon>
    </lineage>
</organism>
<comment type="function">
    <text>Essential for the control of the cell cycle at the G2/M (mitosis) transition.</text>
</comment>
<comment type="subunit">
    <text>Interacts with the cdk1 protein kinase to form a serine/threonine kinase holoenzyme complex also known as maturation promoting factor (MPF). The cyclin subunit imparts substrate specificity to the complex.</text>
</comment>
<comment type="developmental stage">
    <text>Accumulates steadily during G2 and is abruptly destroyed at mitosis. Very low levels are seen in stationary-phase cells (0 hour) which then increase to a maximum between 5 and 6 hours (at which time cells begin to divide). Protein levels then decrease until the end of cell division.</text>
</comment>
<comment type="similarity">
    <text evidence="2">Belongs to the cyclin family. Cyclin AB subfamily.</text>
</comment>
<feature type="chain" id="PRO_0000080384" description="G2/mitotic-specific cyclin-B">
    <location>
        <begin position="1"/>
        <end position="436"/>
    </location>
</feature>
<feature type="region of interest" description="Disordered" evidence="1">
    <location>
        <begin position="1"/>
        <end position="33"/>
    </location>
</feature>
<feature type="compositionally biased region" description="Polar residues" evidence="1">
    <location>
        <begin position="1"/>
        <end position="17"/>
    </location>
</feature>